<accession>B8D5W2</accession>
<keyword id="KW-0963">Cytoplasm</keyword>
<keyword id="KW-0255">Endonuclease</keyword>
<keyword id="KW-0378">Hydrolase</keyword>
<keyword id="KW-0540">Nuclease</keyword>
<keyword id="KW-0819">tRNA processing</keyword>
<evidence type="ECO:0000255" key="1">
    <source>
        <dbReference type="HAMAP-Rule" id="MF_00754"/>
    </source>
</evidence>
<dbReference type="EC" id="3.1.26.5" evidence="1"/>
<dbReference type="EMBL" id="CP001140">
    <property type="protein sequence ID" value="ACL11493.1"/>
    <property type="molecule type" value="Genomic_DNA"/>
</dbReference>
<dbReference type="RefSeq" id="WP_012608834.1">
    <property type="nucleotide sequence ID" value="NC_011766.1"/>
</dbReference>
<dbReference type="SMR" id="B8D5W2"/>
<dbReference type="STRING" id="490899.DKAM_1167"/>
<dbReference type="GeneID" id="7171641"/>
<dbReference type="KEGG" id="dka:DKAM_1167"/>
<dbReference type="eggNOG" id="arCOG00784">
    <property type="taxonomic scope" value="Archaea"/>
</dbReference>
<dbReference type="HOGENOM" id="CLU_107020_2_1_2"/>
<dbReference type="Proteomes" id="UP000006903">
    <property type="component" value="Chromosome"/>
</dbReference>
<dbReference type="GO" id="GO:0005737">
    <property type="term" value="C:cytoplasm"/>
    <property type="evidence" value="ECO:0007669"/>
    <property type="project" value="UniProtKB-SubCell"/>
</dbReference>
<dbReference type="GO" id="GO:0030677">
    <property type="term" value="C:ribonuclease P complex"/>
    <property type="evidence" value="ECO:0007669"/>
    <property type="project" value="UniProtKB-UniRule"/>
</dbReference>
<dbReference type="GO" id="GO:0004526">
    <property type="term" value="F:ribonuclease P activity"/>
    <property type="evidence" value="ECO:0007669"/>
    <property type="project" value="UniProtKB-UniRule"/>
</dbReference>
<dbReference type="GO" id="GO:0003723">
    <property type="term" value="F:RNA binding"/>
    <property type="evidence" value="ECO:0007669"/>
    <property type="project" value="InterPro"/>
</dbReference>
<dbReference type="GO" id="GO:0001682">
    <property type="term" value="P:tRNA 5'-leader removal"/>
    <property type="evidence" value="ECO:0007669"/>
    <property type="project" value="UniProtKB-UniRule"/>
</dbReference>
<dbReference type="Gene3D" id="2.30.30.210">
    <property type="entry name" value="Ribonuclease P/MRP, subunit p29"/>
    <property type="match status" value="1"/>
</dbReference>
<dbReference type="HAMAP" id="MF_00754">
    <property type="entry name" value="RNase_P_1"/>
    <property type="match status" value="1"/>
</dbReference>
<dbReference type="InterPro" id="IPR036980">
    <property type="entry name" value="RNase_P/MRP_Rpp29_sf"/>
</dbReference>
<dbReference type="InterPro" id="IPR023538">
    <property type="entry name" value="RNP1"/>
</dbReference>
<dbReference type="InterPro" id="IPR023534">
    <property type="entry name" value="Rof/RNase_P-like"/>
</dbReference>
<dbReference type="InterPro" id="IPR002730">
    <property type="entry name" value="Rpp29/RNP1"/>
</dbReference>
<dbReference type="Pfam" id="PF01868">
    <property type="entry name" value="RNase_P-MRP_p29"/>
    <property type="match status" value="1"/>
</dbReference>
<dbReference type="SMART" id="SM00538">
    <property type="entry name" value="POP4"/>
    <property type="match status" value="1"/>
</dbReference>
<dbReference type="SUPFAM" id="SSF101744">
    <property type="entry name" value="Rof/RNase P subunit-like"/>
    <property type="match status" value="1"/>
</dbReference>
<proteinExistence type="inferred from homology"/>
<reference key="1">
    <citation type="journal article" date="2009" name="J. Bacteriol.">
        <title>Complete genome sequence of the anaerobic, protein-degrading hyperthermophilic crenarchaeon Desulfurococcus kamchatkensis.</title>
        <authorList>
            <person name="Ravin N.V."/>
            <person name="Mardanov A.V."/>
            <person name="Beletsky A.V."/>
            <person name="Kublanov I.V."/>
            <person name="Kolganova T.V."/>
            <person name="Lebedinsky A.V."/>
            <person name="Chernyh N.A."/>
            <person name="Bonch-Osmolovskaya E.A."/>
            <person name="Skryabin K.G."/>
        </authorList>
    </citation>
    <scope>NUCLEOTIDE SEQUENCE [LARGE SCALE GENOMIC DNA]</scope>
    <source>
        <strain>DSM 18924 / JCM 16383 / VKM B-2413 / 1221n</strain>
    </source>
</reference>
<protein>
    <recommendedName>
        <fullName evidence="1">Ribonuclease P protein component 1</fullName>
        <shortName evidence="1">RNase P component 1</shortName>
        <ecNumber evidence="1">3.1.26.5</ecNumber>
    </recommendedName>
    <alternativeName>
        <fullName evidence="1">Rpp29</fullName>
    </alternativeName>
</protein>
<name>RNP1_DESA1</name>
<sequence>MRVNSRNIAYHELIGLEVRILQYPDPSLVGLKGKVVDETLKTLVIETPSGRRVRIFKFNSILEFMLPDGEAVVIKGSTIIGRPWDRLKMVSR</sequence>
<feature type="chain" id="PRO_1000148362" description="Ribonuclease P protein component 1">
    <location>
        <begin position="1"/>
        <end position="92"/>
    </location>
</feature>
<comment type="function">
    <text evidence="1">Part of ribonuclease P, a protein complex that generates mature tRNA molecules by cleaving their 5'-ends.</text>
</comment>
<comment type="catalytic activity">
    <reaction evidence="1">
        <text>Endonucleolytic cleavage of RNA, removing 5'-extranucleotides from tRNA precursor.</text>
        <dbReference type="EC" id="3.1.26.5"/>
    </reaction>
</comment>
<comment type="subunit">
    <text evidence="1">Consists of a catalytic RNA component and at least 4-5 protein subunits.</text>
</comment>
<comment type="subcellular location">
    <subcellularLocation>
        <location evidence="1">Cytoplasm</location>
    </subcellularLocation>
</comment>
<comment type="similarity">
    <text evidence="1">Belongs to the eukaryotic/archaeal RNase P protein component 1 family.</text>
</comment>
<organism>
    <name type="scientific">Desulfurococcus amylolyticus (strain DSM 18924 / JCM 16383 / VKM B-2413 / 1221n)</name>
    <name type="common">Desulfurococcus kamchatkensis</name>
    <dbReference type="NCBI Taxonomy" id="490899"/>
    <lineage>
        <taxon>Archaea</taxon>
        <taxon>Thermoproteota</taxon>
        <taxon>Thermoprotei</taxon>
        <taxon>Desulfurococcales</taxon>
        <taxon>Desulfurococcaceae</taxon>
        <taxon>Desulfurococcus</taxon>
    </lineage>
</organism>
<gene>
    <name evidence="1" type="primary">rnp1</name>
    <name type="ordered locus">DKAM_1167</name>
</gene>